<accession>Q84P95</accession>
<protein>
    <recommendedName>
        <fullName>5'-adenylylsulfate reductase-like 3</fullName>
    </recommendedName>
    <alternativeName>
        <fullName>Adenosine 5'-phosphosulfate reductase-like 3</fullName>
        <shortName>APR-like 3</shortName>
        <shortName>OsAPRL3</shortName>
    </alternativeName>
</protein>
<proteinExistence type="evidence at transcript level"/>
<reference key="1">
    <citation type="journal article" date="2003" name="Proc. Natl. Acad. Sci. U.S.A.">
        <title>A network of rice genes associated with stress response and seed development.</title>
        <authorList>
            <person name="Cooper B."/>
            <person name="Clarke J.D."/>
            <person name="Budworth P."/>
            <person name="Kreps J."/>
            <person name="Hutchison D."/>
            <person name="Park S."/>
            <person name="Guimil S."/>
            <person name="Dunn M."/>
            <person name="Luginbuehl P."/>
            <person name="Ellero C."/>
            <person name="Goff S.A."/>
            <person name="Glazebrook J."/>
        </authorList>
    </citation>
    <scope>NUCLEOTIDE SEQUENCE [MRNA]</scope>
    <source>
        <strain>cv. Nipponbare</strain>
    </source>
</reference>
<reference key="2">
    <citation type="journal article" date="2005" name="Nature">
        <title>The map-based sequence of the rice genome.</title>
        <authorList>
            <consortium name="International rice genome sequencing project (IRGSP)"/>
        </authorList>
    </citation>
    <scope>NUCLEOTIDE SEQUENCE [LARGE SCALE GENOMIC DNA]</scope>
    <source>
        <strain>cv. Nipponbare</strain>
    </source>
</reference>
<reference key="3">
    <citation type="journal article" date="2008" name="Nucleic Acids Res.">
        <title>The rice annotation project database (RAP-DB): 2008 update.</title>
        <authorList>
            <consortium name="The rice annotation project (RAP)"/>
        </authorList>
    </citation>
    <scope>GENOME REANNOTATION</scope>
    <source>
        <strain>cv. Nipponbare</strain>
    </source>
</reference>
<reference key="4">
    <citation type="journal article" date="2013" name="Rice">
        <title>Improvement of the Oryza sativa Nipponbare reference genome using next generation sequence and optical map data.</title>
        <authorList>
            <person name="Kawahara Y."/>
            <person name="de la Bastide M."/>
            <person name="Hamilton J.P."/>
            <person name="Kanamori H."/>
            <person name="McCombie W.R."/>
            <person name="Ouyang S."/>
            <person name="Schwartz D.C."/>
            <person name="Tanaka T."/>
            <person name="Wu J."/>
            <person name="Zhou S."/>
            <person name="Childs K.L."/>
            <person name="Davidson R.M."/>
            <person name="Lin H."/>
            <person name="Quesada-Ocampo L."/>
            <person name="Vaillancourt B."/>
            <person name="Sakai H."/>
            <person name="Lee S.S."/>
            <person name="Kim J."/>
            <person name="Numa H."/>
            <person name="Itoh T."/>
            <person name="Buell C.R."/>
            <person name="Matsumoto T."/>
        </authorList>
    </citation>
    <scope>GENOME REANNOTATION</scope>
    <source>
        <strain>cv. Nipponbare</strain>
    </source>
</reference>
<reference key="5">
    <citation type="journal article" date="2005" name="PLoS Biol.">
        <title>The genomes of Oryza sativa: a history of duplications.</title>
        <authorList>
            <person name="Yu J."/>
            <person name="Wang J."/>
            <person name="Lin W."/>
            <person name="Li S."/>
            <person name="Li H."/>
            <person name="Zhou J."/>
            <person name="Ni P."/>
            <person name="Dong W."/>
            <person name="Hu S."/>
            <person name="Zeng C."/>
            <person name="Zhang J."/>
            <person name="Zhang Y."/>
            <person name="Li R."/>
            <person name="Xu Z."/>
            <person name="Li S."/>
            <person name="Li X."/>
            <person name="Zheng H."/>
            <person name="Cong L."/>
            <person name="Lin L."/>
            <person name="Yin J."/>
            <person name="Geng J."/>
            <person name="Li G."/>
            <person name="Shi J."/>
            <person name="Liu J."/>
            <person name="Lv H."/>
            <person name="Li J."/>
            <person name="Wang J."/>
            <person name="Deng Y."/>
            <person name="Ran L."/>
            <person name="Shi X."/>
            <person name="Wang X."/>
            <person name="Wu Q."/>
            <person name="Li C."/>
            <person name="Ren X."/>
            <person name="Wang J."/>
            <person name="Wang X."/>
            <person name="Li D."/>
            <person name="Liu D."/>
            <person name="Zhang X."/>
            <person name="Ji Z."/>
            <person name="Zhao W."/>
            <person name="Sun Y."/>
            <person name="Zhang Z."/>
            <person name="Bao J."/>
            <person name="Han Y."/>
            <person name="Dong L."/>
            <person name="Ji J."/>
            <person name="Chen P."/>
            <person name="Wu S."/>
            <person name="Liu J."/>
            <person name="Xiao Y."/>
            <person name="Bu D."/>
            <person name="Tan J."/>
            <person name="Yang L."/>
            <person name="Ye C."/>
            <person name="Zhang J."/>
            <person name="Xu J."/>
            <person name="Zhou Y."/>
            <person name="Yu Y."/>
            <person name="Zhang B."/>
            <person name="Zhuang S."/>
            <person name="Wei H."/>
            <person name="Liu B."/>
            <person name="Lei M."/>
            <person name="Yu H."/>
            <person name="Li Y."/>
            <person name="Xu H."/>
            <person name="Wei S."/>
            <person name="He X."/>
            <person name="Fang L."/>
            <person name="Zhang Z."/>
            <person name="Zhang Y."/>
            <person name="Huang X."/>
            <person name="Su Z."/>
            <person name="Tong W."/>
            <person name="Li J."/>
            <person name="Tong Z."/>
            <person name="Li S."/>
            <person name="Ye J."/>
            <person name="Wang L."/>
            <person name="Fang L."/>
            <person name="Lei T."/>
            <person name="Chen C.-S."/>
            <person name="Chen H.-C."/>
            <person name="Xu Z."/>
            <person name="Li H."/>
            <person name="Huang H."/>
            <person name="Zhang F."/>
            <person name="Xu H."/>
            <person name="Li N."/>
            <person name="Zhao C."/>
            <person name="Li S."/>
            <person name="Dong L."/>
            <person name="Huang Y."/>
            <person name="Li L."/>
            <person name="Xi Y."/>
            <person name="Qi Q."/>
            <person name="Li W."/>
            <person name="Zhang B."/>
            <person name="Hu W."/>
            <person name="Zhang Y."/>
            <person name="Tian X."/>
            <person name="Jiao Y."/>
            <person name="Liang X."/>
            <person name="Jin J."/>
            <person name="Gao L."/>
            <person name="Zheng W."/>
            <person name="Hao B."/>
            <person name="Liu S.-M."/>
            <person name="Wang W."/>
            <person name="Yuan L."/>
            <person name="Cao M."/>
            <person name="McDermott J."/>
            <person name="Samudrala R."/>
            <person name="Wang J."/>
            <person name="Wong G.K.-S."/>
            <person name="Yang H."/>
        </authorList>
    </citation>
    <scope>NUCLEOTIDE SEQUENCE [LARGE SCALE GENOMIC DNA]</scope>
    <source>
        <strain>cv. Nipponbare</strain>
    </source>
</reference>
<feature type="signal peptide" evidence="1">
    <location>
        <begin position="1"/>
        <end position="22"/>
    </location>
</feature>
<feature type="chain" id="PRO_0000400046" description="5'-adenylylsulfate reductase-like 3">
    <location>
        <begin position="23"/>
        <end position="311"/>
    </location>
</feature>
<feature type="transmembrane region" description="Helical" evidence="1">
    <location>
        <begin position="210"/>
        <end position="230"/>
    </location>
</feature>
<feature type="domain" description="Thioredoxin" evidence="2">
    <location>
        <begin position="23"/>
        <end position="164"/>
    </location>
</feature>
<feature type="glycosylation site" description="N-linked (GlcNAc...) asparagine" evidence="1">
    <location>
        <position position="139"/>
    </location>
</feature>
<feature type="glycosylation site" description="N-linked (GlcNAc...) asparagine" evidence="1">
    <location>
        <position position="281"/>
    </location>
</feature>
<feature type="glycosylation site" description="N-linked (GlcNAc...) asparagine" evidence="1">
    <location>
        <position position="305"/>
    </location>
</feature>
<sequence>MATRLLCWTALLLPIIAATAAASPLPEACPVPTAAEEILGPGGTCTTLDRRGDPVGVIEGDEVTLAKAITLLHMNKDDYIAVLFYASWCPFSQECKPNFEILASLFPSIRHFAFEESSIRPSIISRYGIHGFPTLFLLNSTMRVRYHGPRTVKSLAAFYRDVSGFDVSMTSEAVLHSVDGIELKKDAEQENCPFWWARSPEKILQQDTYLALATAFVILRLLYLLFPKIGSFAKRAWRRHTLFPNLVGVHEYFFTYLEQARHKFFRLYPSKRGNLQEGARNATAWASKSLASVSIGEPSTIGRTNSTNELR</sequence>
<name>APRL3_ORYSJ</name>
<organism>
    <name type="scientific">Oryza sativa subsp. japonica</name>
    <name type="common">Rice</name>
    <dbReference type="NCBI Taxonomy" id="39947"/>
    <lineage>
        <taxon>Eukaryota</taxon>
        <taxon>Viridiplantae</taxon>
        <taxon>Streptophyta</taxon>
        <taxon>Embryophyta</taxon>
        <taxon>Tracheophyta</taxon>
        <taxon>Spermatophyta</taxon>
        <taxon>Magnoliopsida</taxon>
        <taxon>Liliopsida</taxon>
        <taxon>Poales</taxon>
        <taxon>Poaceae</taxon>
        <taxon>BOP clade</taxon>
        <taxon>Oryzoideae</taxon>
        <taxon>Oryzeae</taxon>
        <taxon>Oryzinae</taxon>
        <taxon>Oryza</taxon>
        <taxon>Oryza sativa</taxon>
    </lineage>
</organism>
<evidence type="ECO:0000255" key="1"/>
<evidence type="ECO:0000255" key="2">
    <source>
        <dbReference type="PROSITE-ProRule" id="PRU00691"/>
    </source>
</evidence>
<evidence type="ECO:0000305" key="3"/>
<comment type="subcellular location">
    <subcellularLocation>
        <location evidence="3">Membrane</location>
        <topology evidence="3">Single-pass membrane protein</topology>
    </subcellularLocation>
</comment>
<dbReference type="EMBL" id="AY224470">
    <property type="protein sequence ID" value="AAO72589.1"/>
    <property type="molecule type" value="mRNA"/>
</dbReference>
<dbReference type="EMBL" id="AP005012">
    <property type="protein sequence ID" value="BAD17244.1"/>
    <property type="molecule type" value="Genomic_DNA"/>
</dbReference>
<dbReference type="EMBL" id="AP008208">
    <property type="protein sequence ID" value="BAF10073.1"/>
    <property type="molecule type" value="Genomic_DNA"/>
</dbReference>
<dbReference type="EMBL" id="AP014958">
    <property type="status" value="NOT_ANNOTATED_CDS"/>
    <property type="molecule type" value="Genomic_DNA"/>
</dbReference>
<dbReference type="EMBL" id="CM000139">
    <property type="protein sequence ID" value="EAZ24661.1"/>
    <property type="molecule type" value="Genomic_DNA"/>
</dbReference>
<dbReference type="RefSeq" id="XP_015626305.1">
    <property type="nucleotide sequence ID" value="XM_015770819.1"/>
</dbReference>
<dbReference type="SMR" id="Q84P95"/>
<dbReference type="FunCoup" id="Q84P95">
    <property type="interactions" value="224"/>
</dbReference>
<dbReference type="IntAct" id="Q84P95">
    <property type="interactions" value="1"/>
</dbReference>
<dbReference type="GlyCosmos" id="Q84P95">
    <property type="glycosylation" value="3 sites, No reported glycans"/>
</dbReference>
<dbReference type="PaxDb" id="39947-Q84P95"/>
<dbReference type="KEGG" id="dosa:Os02g0754900"/>
<dbReference type="eggNOG" id="KOG2640">
    <property type="taxonomic scope" value="Eukaryota"/>
</dbReference>
<dbReference type="HOGENOM" id="CLU_051582_0_0_1"/>
<dbReference type="InParanoid" id="Q84P95"/>
<dbReference type="OrthoDB" id="19690at2759"/>
<dbReference type="Proteomes" id="UP000000763">
    <property type="component" value="Chromosome 2"/>
</dbReference>
<dbReference type="Proteomes" id="UP000007752">
    <property type="component" value="Chromosome 2"/>
</dbReference>
<dbReference type="Proteomes" id="UP000059680">
    <property type="component" value="Chromosome 2"/>
</dbReference>
<dbReference type="GO" id="GO:0016020">
    <property type="term" value="C:membrane"/>
    <property type="evidence" value="ECO:0007669"/>
    <property type="project" value="UniProtKB-SubCell"/>
</dbReference>
<dbReference type="GO" id="GO:0016853">
    <property type="term" value="F:isomerase activity"/>
    <property type="evidence" value="ECO:0007669"/>
    <property type="project" value="UniProtKB-KW"/>
</dbReference>
<dbReference type="CDD" id="cd02999">
    <property type="entry name" value="PDI_a_ERp44_like"/>
    <property type="match status" value="1"/>
</dbReference>
<dbReference type="Gene3D" id="3.40.30.10">
    <property type="entry name" value="Glutaredoxin"/>
    <property type="match status" value="1"/>
</dbReference>
<dbReference type="InterPro" id="IPR044606">
    <property type="entry name" value="APRL4/6"/>
</dbReference>
<dbReference type="InterPro" id="IPR036249">
    <property type="entry name" value="Thioredoxin-like_sf"/>
</dbReference>
<dbReference type="InterPro" id="IPR013766">
    <property type="entry name" value="Thioredoxin_domain"/>
</dbReference>
<dbReference type="PANTHER" id="PTHR46854">
    <property type="entry name" value="5'-ADENYLYLSULFATE REDUCTASE-LIKE 4-RELATED"/>
    <property type="match status" value="1"/>
</dbReference>
<dbReference type="PANTHER" id="PTHR46854:SF1">
    <property type="entry name" value="5'-ADENYLYLSULFATE REDUCTASE-LIKE 4-RELATED"/>
    <property type="match status" value="1"/>
</dbReference>
<dbReference type="Pfam" id="PF00085">
    <property type="entry name" value="Thioredoxin"/>
    <property type="match status" value="1"/>
</dbReference>
<dbReference type="SUPFAM" id="SSF52833">
    <property type="entry name" value="Thioredoxin-like"/>
    <property type="match status" value="1"/>
</dbReference>
<dbReference type="PROSITE" id="PS51352">
    <property type="entry name" value="THIOREDOXIN_2"/>
    <property type="match status" value="1"/>
</dbReference>
<gene>
    <name type="primary">APRL3</name>
    <name type="ordered locus">Os02g0754900</name>
    <name type="ordered locus">LOC_Os02g51850</name>
    <name type="ORF">OsJ_08430</name>
    <name type="ORF">P0627E03.20</name>
</gene>
<keyword id="KW-0325">Glycoprotein</keyword>
<keyword id="KW-0413">Isomerase</keyword>
<keyword id="KW-0472">Membrane</keyword>
<keyword id="KW-1185">Reference proteome</keyword>
<keyword id="KW-0732">Signal</keyword>
<keyword id="KW-0812">Transmembrane</keyword>
<keyword id="KW-1133">Transmembrane helix</keyword>